<evidence type="ECO:0000250" key="1"/>
<evidence type="ECO:0000250" key="2">
    <source>
        <dbReference type="UniProtKB" id="O15258"/>
    </source>
</evidence>
<evidence type="ECO:0000255" key="3"/>
<evidence type="ECO:0000305" key="4"/>
<evidence type="ECO:0007744" key="5">
    <source>
    </source>
</evidence>
<gene>
    <name type="primary">Rer1</name>
</gene>
<organism>
    <name type="scientific">Rattus norvegicus</name>
    <name type="common">Rat</name>
    <dbReference type="NCBI Taxonomy" id="10116"/>
    <lineage>
        <taxon>Eukaryota</taxon>
        <taxon>Metazoa</taxon>
        <taxon>Chordata</taxon>
        <taxon>Craniata</taxon>
        <taxon>Vertebrata</taxon>
        <taxon>Euteleostomi</taxon>
        <taxon>Mammalia</taxon>
        <taxon>Eutheria</taxon>
        <taxon>Euarchontoglires</taxon>
        <taxon>Glires</taxon>
        <taxon>Rodentia</taxon>
        <taxon>Myomorpha</taxon>
        <taxon>Muroidea</taxon>
        <taxon>Muridae</taxon>
        <taxon>Murinae</taxon>
        <taxon>Rattus</taxon>
    </lineage>
</organism>
<accession>Q498C8</accession>
<dbReference type="EMBL" id="BC100270">
    <property type="protein sequence ID" value="AAI00271.1"/>
    <property type="molecule type" value="mRNA"/>
</dbReference>
<dbReference type="RefSeq" id="NP_001034101.1">
    <property type="nucleotide sequence ID" value="NM_001039012.1"/>
</dbReference>
<dbReference type="FunCoup" id="Q498C8">
    <property type="interactions" value="3499"/>
</dbReference>
<dbReference type="IntAct" id="Q498C8">
    <property type="interactions" value="1"/>
</dbReference>
<dbReference type="STRING" id="10116.ENSRNOP00000019620"/>
<dbReference type="iPTMnet" id="Q498C8"/>
<dbReference type="PhosphoSitePlus" id="Q498C8"/>
<dbReference type="jPOST" id="Q498C8"/>
<dbReference type="PaxDb" id="10116-ENSRNOP00000019620"/>
<dbReference type="GeneID" id="298675"/>
<dbReference type="KEGG" id="rno:298675"/>
<dbReference type="AGR" id="RGD:1306324"/>
<dbReference type="CTD" id="11079"/>
<dbReference type="RGD" id="1306324">
    <property type="gene designation" value="Rer1"/>
</dbReference>
<dbReference type="VEuPathDB" id="HostDB:ENSRNOG00000014270"/>
<dbReference type="eggNOG" id="KOG1688">
    <property type="taxonomic scope" value="Eukaryota"/>
</dbReference>
<dbReference type="HOGENOM" id="CLU_074889_1_0_1"/>
<dbReference type="InParanoid" id="Q498C8"/>
<dbReference type="OrthoDB" id="3854at9989"/>
<dbReference type="PhylomeDB" id="Q498C8"/>
<dbReference type="TreeFam" id="TF300029"/>
<dbReference type="PRO" id="PR:Q498C8"/>
<dbReference type="Proteomes" id="UP000002494">
    <property type="component" value="Chromosome 5"/>
</dbReference>
<dbReference type="Bgee" id="ENSRNOG00000014270">
    <property type="expression patterns" value="Expressed in duodenum and 20 other cell types or tissues"/>
</dbReference>
<dbReference type="GO" id="GO:0009986">
    <property type="term" value="C:cell surface"/>
    <property type="evidence" value="ECO:0000266"/>
    <property type="project" value="RGD"/>
</dbReference>
<dbReference type="GO" id="GO:0005783">
    <property type="term" value="C:endoplasmic reticulum"/>
    <property type="evidence" value="ECO:0007669"/>
    <property type="project" value="GOC"/>
</dbReference>
<dbReference type="GO" id="GO:0005793">
    <property type="term" value="C:endoplasmic reticulum-Golgi intermediate compartment"/>
    <property type="evidence" value="ECO:0000266"/>
    <property type="project" value="RGD"/>
</dbReference>
<dbReference type="GO" id="GO:0000139">
    <property type="term" value="C:Golgi membrane"/>
    <property type="evidence" value="ECO:0000266"/>
    <property type="project" value="RGD"/>
</dbReference>
<dbReference type="GO" id="GO:0005886">
    <property type="term" value="C:plasma membrane"/>
    <property type="evidence" value="ECO:0007669"/>
    <property type="project" value="GOC"/>
</dbReference>
<dbReference type="GO" id="GO:0033130">
    <property type="term" value="F:acetylcholine receptor binding"/>
    <property type="evidence" value="ECO:0000266"/>
    <property type="project" value="RGD"/>
</dbReference>
<dbReference type="GO" id="GO:0007528">
    <property type="term" value="P:neuromuscular junction development"/>
    <property type="evidence" value="ECO:0000266"/>
    <property type="project" value="RGD"/>
</dbReference>
<dbReference type="GO" id="GO:1903078">
    <property type="term" value="P:positive regulation of protein localization to plasma membrane"/>
    <property type="evidence" value="ECO:0000266"/>
    <property type="project" value="RGD"/>
</dbReference>
<dbReference type="GO" id="GO:0006621">
    <property type="term" value="P:protein retention in ER lumen"/>
    <property type="evidence" value="ECO:0000318"/>
    <property type="project" value="GO_Central"/>
</dbReference>
<dbReference type="GO" id="GO:0006890">
    <property type="term" value="P:retrograde vesicle-mediated transport, Golgi to endoplasmic reticulum"/>
    <property type="evidence" value="ECO:0000266"/>
    <property type="project" value="RGD"/>
</dbReference>
<dbReference type="GO" id="GO:0071340">
    <property type="term" value="P:skeletal muscle acetylcholine-gated channel clustering"/>
    <property type="evidence" value="ECO:0000266"/>
    <property type="project" value="RGD"/>
</dbReference>
<dbReference type="InterPro" id="IPR004932">
    <property type="entry name" value="Rer1"/>
</dbReference>
<dbReference type="PANTHER" id="PTHR10743">
    <property type="entry name" value="PROTEIN RER1"/>
    <property type="match status" value="1"/>
</dbReference>
<dbReference type="PANTHER" id="PTHR10743:SF0">
    <property type="entry name" value="PROTEIN RER1"/>
    <property type="match status" value="1"/>
</dbReference>
<dbReference type="Pfam" id="PF03248">
    <property type="entry name" value="Rer1"/>
    <property type="match status" value="1"/>
</dbReference>
<dbReference type="PIRSF" id="PIRSF016013">
    <property type="entry name" value="AtER_Rer1p"/>
    <property type="match status" value="1"/>
</dbReference>
<sequence length="196" mass="22988">MSEGDSVGDSVHGKPSVVYRFFSRLGQIYQSWLDKSTPYTAVRWVVTLGLSFVYMIRVYLLQGWYIVTYALGIYHLNLFIAFLSPKVDPSLMEDSDDGPSLPTKQNEEFRPFIRRLPEFKFWHAATKGILVAMICTFFEAFNVPVFWPILVMYFIMLFCITMKRQIKHMIKYRYIPFTHGKRRYKGKEDVGKTFAS</sequence>
<proteinExistence type="evidence at protein level"/>
<feature type="initiator methionine" description="Removed" evidence="2">
    <location>
        <position position="1"/>
    </location>
</feature>
<feature type="chain" id="PRO_0000261128" description="Protein RER1">
    <location>
        <begin position="2"/>
        <end position="196"/>
    </location>
</feature>
<feature type="transmembrane region" description="Helical" evidence="3">
    <location>
        <begin position="41"/>
        <end position="61"/>
    </location>
</feature>
<feature type="transmembrane region" description="Helical" evidence="3">
    <location>
        <begin position="63"/>
        <end position="83"/>
    </location>
</feature>
<feature type="transmembrane region" description="Helical" evidence="3">
    <location>
        <begin position="140"/>
        <end position="160"/>
    </location>
</feature>
<feature type="modified residue" description="N-acetylserine" evidence="2">
    <location>
        <position position="2"/>
    </location>
</feature>
<feature type="modified residue" description="Phosphoserine" evidence="5">
    <location>
        <position position="2"/>
    </location>
</feature>
<feature type="modified residue" description="Phosphoserine" evidence="2">
    <location>
        <position position="6"/>
    </location>
</feature>
<feature type="modified residue" description="Phosphoserine" evidence="2">
    <location>
        <position position="10"/>
    </location>
</feature>
<feature type="modified residue" description="Phosphoserine" evidence="5">
    <location>
        <position position="95"/>
    </location>
</feature>
<comment type="function">
    <text evidence="1">Involved in the retrieval of endoplasmic reticulum membrane proteins from the early Golgi compartment.</text>
</comment>
<comment type="subcellular location">
    <subcellularLocation>
        <location evidence="1">Golgi apparatus membrane</location>
        <topology evidence="1">Multi-pass membrane protein</topology>
    </subcellularLocation>
</comment>
<comment type="similarity">
    <text evidence="4">Belongs to the RER1 family.</text>
</comment>
<name>RER1_RAT</name>
<reference key="1">
    <citation type="journal article" date="2004" name="Genome Res.">
        <title>The status, quality, and expansion of the NIH full-length cDNA project: the Mammalian Gene Collection (MGC).</title>
        <authorList>
            <consortium name="The MGC Project Team"/>
        </authorList>
    </citation>
    <scope>NUCLEOTIDE SEQUENCE [LARGE SCALE MRNA]</scope>
    <source>
        <tissue>Placenta</tissue>
    </source>
</reference>
<reference key="2">
    <citation type="journal article" date="2012" name="Nat. Commun.">
        <title>Quantitative maps of protein phosphorylation sites across 14 different rat organs and tissues.</title>
        <authorList>
            <person name="Lundby A."/>
            <person name="Secher A."/>
            <person name="Lage K."/>
            <person name="Nordsborg N.B."/>
            <person name="Dmytriyev A."/>
            <person name="Lundby C."/>
            <person name="Olsen J.V."/>
        </authorList>
    </citation>
    <scope>PHOSPHORYLATION [LARGE SCALE ANALYSIS] AT SER-2 AND SER-95</scope>
    <scope>IDENTIFICATION BY MASS SPECTROMETRY [LARGE SCALE ANALYSIS]</scope>
</reference>
<keyword id="KW-0007">Acetylation</keyword>
<keyword id="KW-0333">Golgi apparatus</keyword>
<keyword id="KW-0472">Membrane</keyword>
<keyword id="KW-0597">Phosphoprotein</keyword>
<keyword id="KW-1185">Reference proteome</keyword>
<keyword id="KW-0812">Transmembrane</keyword>
<keyword id="KW-1133">Transmembrane helix</keyword>
<protein>
    <recommendedName>
        <fullName>Protein RER1</fullName>
    </recommendedName>
</protein>